<organism>
    <name type="scientific">Xanthomonas euvesicatoria pv. vesicatoria (strain 85-10)</name>
    <name type="common">Xanthomonas campestris pv. vesicatoria</name>
    <dbReference type="NCBI Taxonomy" id="316273"/>
    <lineage>
        <taxon>Bacteria</taxon>
        <taxon>Pseudomonadati</taxon>
        <taxon>Pseudomonadota</taxon>
        <taxon>Gammaproteobacteria</taxon>
        <taxon>Lysobacterales</taxon>
        <taxon>Lysobacteraceae</taxon>
        <taxon>Xanthomonas</taxon>
    </lineage>
</organism>
<name>LOLD_XANE5</name>
<evidence type="ECO:0000255" key="1">
    <source>
        <dbReference type="HAMAP-Rule" id="MF_01708"/>
    </source>
</evidence>
<reference key="1">
    <citation type="journal article" date="2005" name="J. Bacteriol.">
        <title>Insights into genome plasticity and pathogenicity of the plant pathogenic Bacterium Xanthomonas campestris pv. vesicatoria revealed by the complete genome sequence.</title>
        <authorList>
            <person name="Thieme F."/>
            <person name="Koebnik R."/>
            <person name="Bekel T."/>
            <person name="Berger C."/>
            <person name="Boch J."/>
            <person name="Buettner D."/>
            <person name="Caldana C."/>
            <person name="Gaigalat L."/>
            <person name="Goesmann A."/>
            <person name="Kay S."/>
            <person name="Kirchner O."/>
            <person name="Lanz C."/>
            <person name="Linke B."/>
            <person name="McHardy A.C."/>
            <person name="Meyer F."/>
            <person name="Mittenhuber G."/>
            <person name="Nies D.H."/>
            <person name="Niesbach-Kloesgen U."/>
            <person name="Patschkowski T."/>
            <person name="Rueckert C."/>
            <person name="Rupp O."/>
            <person name="Schneiker S."/>
            <person name="Schuster S.C."/>
            <person name="Vorhoelter F.J."/>
            <person name="Weber E."/>
            <person name="Puehler A."/>
            <person name="Bonas U."/>
            <person name="Bartels D."/>
            <person name="Kaiser O."/>
        </authorList>
    </citation>
    <scope>NUCLEOTIDE SEQUENCE [LARGE SCALE GENOMIC DNA]</scope>
    <source>
        <strain>85-10</strain>
    </source>
</reference>
<gene>
    <name evidence="1" type="primary">lolD</name>
    <name type="ordered locus">XCV2249</name>
</gene>
<protein>
    <recommendedName>
        <fullName evidence="1">Lipoprotein-releasing system ATP-binding protein LolD</fullName>
        <ecNumber evidence="1">7.6.2.-</ecNumber>
    </recommendedName>
</protein>
<dbReference type="EC" id="7.6.2.-" evidence="1"/>
<dbReference type="EMBL" id="AM039952">
    <property type="protein sequence ID" value="CAJ23926.1"/>
    <property type="molecule type" value="Genomic_DNA"/>
</dbReference>
<dbReference type="RefSeq" id="WP_011347452.1">
    <property type="nucleotide sequence ID" value="NZ_CP017190.1"/>
</dbReference>
<dbReference type="SMR" id="Q3BTD3"/>
<dbReference type="STRING" id="456327.BJD11_11145"/>
<dbReference type="KEGG" id="xcv:XCV2249"/>
<dbReference type="eggNOG" id="COG1136">
    <property type="taxonomic scope" value="Bacteria"/>
</dbReference>
<dbReference type="HOGENOM" id="CLU_000604_1_22_6"/>
<dbReference type="Proteomes" id="UP000007069">
    <property type="component" value="Chromosome"/>
</dbReference>
<dbReference type="GO" id="GO:0005886">
    <property type="term" value="C:plasma membrane"/>
    <property type="evidence" value="ECO:0007669"/>
    <property type="project" value="UniProtKB-SubCell"/>
</dbReference>
<dbReference type="GO" id="GO:0005524">
    <property type="term" value="F:ATP binding"/>
    <property type="evidence" value="ECO:0007669"/>
    <property type="project" value="UniProtKB-KW"/>
</dbReference>
<dbReference type="GO" id="GO:0016887">
    <property type="term" value="F:ATP hydrolysis activity"/>
    <property type="evidence" value="ECO:0007669"/>
    <property type="project" value="InterPro"/>
</dbReference>
<dbReference type="GO" id="GO:0022857">
    <property type="term" value="F:transmembrane transporter activity"/>
    <property type="evidence" value="ECO:0007669"/>
    <property type="project" value="TreeGrafter"/>
</dbReference>
<dbReference type="GO" id="GO:0044874">
    <property type="term" value="P:lipoprotein localization to outer membrane"/>
    <property type="evidence" value="ECO:0007669"/>
    <property type="project" value="TreeGrafter"/>
</dbReference>
<dbReference type="GO" id="GO:0089705">
    <property type="term" value="P:protein localization to outer membrane"/>
    <property type="evidence" value="ECO:0007669"/>
    <property type="project" value="TreeGrafter"/>
</dbReference>
<dbReference type="CDD" id="cd03255">
    <property type="entry name" value="ABC_MJ0796_LolCDE_FtsE"/>
    <property type="match status" value="1"/>
</dbReference>
<dbReference type="FunFam" id="3.40.50.300:FF:000230">
    <property type="entry name" value="Lipoprotein-releasing system ATP-binding protein LolD"/>
    <property type="match status" value="1"/>
</dbReference>
<dbReference type="Gene3D" id="3.40.50.300">
    <property type="entry name" value="P-loop containing nucleotide triphosphate hydrolases"/>
    <property type="match status" value="1"/>
</dbReference>
<dbReference type="InterPro" id="IPR003593">
    <property type="entry name" value="AAA+_ATPase"/>
</dbReference>
<dbReference type="InterPro" id="IPR003439">
    <property type="entry name" value="ABC_transporter-like_ATP-bd"/>
</dbReference>
<dbReference type="InterPro" id="IPR015854">
    <property type="entry name" value="ABC_transpr_LolD-like"/>
</dbReference>
<dbReference type="InterPro" id="IPR011924">
    <property type="entry name" value="LolD_lipo_ATP-bd"/>
</dbReference>
<dbReference type="InterPro" id="IPR017911">
    <property type="entry name" value="MacB-like_ATP-bd"/>
</dbReference>
<dbReference type="InterPro" id="IPR027417">
    <property type="entry name" value="P-loop_NTPase"/>
</dbReference>
<dbReference type="NCBIfam" id="TIGR02211">
    <property type="entry name" value="LolD_lipo_ex"/>
    <property type="match status" value="1"/>
</dbReference>
<dbReference type="PANTHER" id="PTHR24220">
    <property type="entry name" value="IMPORT ATP-BINDING PROTEIN"/>
    <property type="match status" value="1"/>
</dbReference>
<dbReference type="PANTHER" id="PTHR24220:SF689">
    <property type="entry name" value="LIPOPROTEIN-RELEASING SYSTEM ATP-BINDING PROTEIN LOLD"/>
    <property type="match status" value="1"/>
</dbReference>
<dbReference type="Pfam" id="PF00005">
    <property type="entry name" value="ABC_tran"/>
    <property type="match status" value="1"/>
</dbReference>
<dbReference type="SMART" id="SM00382">
    <property type="entry name" value="AAA"/>
    <property type="match status" value="1"/>
</dbReference>
<dbReference type="SUPFAM" id="SSF52540">
    <property type="entry name" value="P-loop containing nucleoside triphosphate hydrolases"/>
    <property type="match status" value="1"/>
</dbReference>
<dbReference type="PROSITE" id="PS50893">
    <property type="entry name" value="ABC_TRANSPORTER_2"/>
    <property type="match status" value="1"/>
</dbReference>
<dbReference type="PROSITE" id="PS51244">
    <property type="entry name" value="LOLD"/>
    <property type="match status" value="1"/>
</dbReference>
<sequence>MNEIREAAVQTPEQATAVIRAEALAKTYAEGKMRTPVFDGLDLSVATGETVAIVGASGAGKSTLLHLLGGLDIPTSGEVYVAGERMSALSDAQRGKLRNQALGFVYQFHHLLPEFTALENVMMPVLLSGKDVAVAKGQALQLLESVGLGHRVEHKPSELSGGERQRCAVARALVNKPGCVLGDEPTGNLDDKTAGTVFELMLELNRAQRTSLVLVTHDRGLARRLDRVLELNQGKLRELAPSAV</sequence>
<accession>Q3BTD3</accession>
<proteinExistence type="inferred from homology"/>
<feature type="chain" id="PRO_0000272166" description="Lipoprotein-releasing system ATP-binding protein LolD">
    <location>
        <begin position="1"/>
        <end position="244"/>
    </location>
</feature>
<feature type="domain" description="ABC transporter" evidence="1">
    <location>
        <begin position="19"/>
        <end position="244"/>
    </location>
</feature>
<feature type="binding site" evidence="1">
    <location>
        <begin position="55"/>
        <end position="62"/>
    </location>
    <ligand>
        <name>ATP</name>
        <dbReference type="ChEBI" id="CHEBI:30616"/>
    </ligand>
</feature>
<keyword id="KW-0067">ATP-binding</keyword>
<keyword id="KW-0997">Cell inner membrane</keyword>
<keyword id="KW-1003">Cell membrane</keyword>
<keyword id="KW-0472">Membrane</keyword>
<keyword id="KW-0547">Nucleotide-binding</keyword>
<keyword id="KW-1278">Translocase</keyword>
<keyword id="KW-0813">Transport</keyword>
<comment type="function">
    <text evidence="1">Part of the ABC transporter complex LolCDE involved in the translocation of mature outer membrane-directed lipoproteins, from the inner membrane to the periplasmic chaperone, LolA. Responsible for the formation of the LolA-lipoprotein complex in an ATP-dependent manner.</text>
</comment>
<comment type="subunit">
    <text evidence="1">The complex is composed of two ATP-binding proteins (LolD) and two transmembrane proteins (LolC and LolE).</text>
</comment>
<comment type="subcellular location">
    <subcellularLocation>
        <location evidence="1">Cell inner membrane</location>
        <topology evidence="1">Peripheral membrane protein</topology>
    </subcellularLocation>
</comment>
<comment type="similarity">
    <text evidence="1">Belongs to the ABC transporter superfamily. Lipoprotein translocase (TC 3.A.1.125) family.</text>
</comment>